<organism>
    <name type="scientific">Synechococcus sp. (strain WH7803)</name>
    <dbReference type="NCBI Taxonomy" id="32051"/>
    <lineage>
        <taxon>Bacteria</taxon>
        <taxon>Bacillati</taxon>
        <taxon>Cyanobacteriota</taxon>
        <taxon>Cyanophyceae</taxon>
        <taxon>Synechococcales</taxon>
        <taxon>Synechococcaceae</taxon>
        <taxon>Synechococcus</taxon>
    </lineage>
</organism>
<protein>
    <recommendedName>
        <fullName evidence="1">Small ribosomal subunit protein uS19</fullName>
    </recommendedName>
    <alternativeName>
        <fullName evidence="2">30S ribosomal protein S19</fullName>
    </alternativeName>
</protein>
<proteinExistence type="inferred from homology"/>
<evidence type="ECO:0000255" key="1">
    <source>
        <dbReference type="HAMAP-Rule" id="MF_00531"/>
    </source>
</evidence>
<evidence type="ECO:0000305" key="2"/>
<comment type="function">
    <text evidence="1">Protein S19 forms a complex with S13 that binds strongly to the 16S ribosomal RNA.</text>
</comment>
<comment type="similarity">
    <text evidence="1">Belongs to the universal ribosomal protein uS19 family.</text>
</comment>
<feature type="chain" id="PRO_1000051137" description="Small ribosomal subunit protein uS19">
    <location>
        <begin position="1"/>
        <end position="91"/>
    </location>
</feature>
<name>RS19_SYNPW</name>
<gene>
    <name evidence="1" type="primary">rpsS</name>
    <name evidence="1" type="synonym">rps19</name>
    <name type="ordered locus">SynWH7803_0430</name>
</gene>
<keyword id="KW-1185">Reference proteome</keyword>
<keyword id="KW-0687">Ribonucleoprotein</keyword>
<keyword id="KW-0689">Ribosomal protein</keyword>
<keyword id="KW-0694">RNA-binding</keyword>
<keyword id="KW-0699">rRNA-binding</keyword>
<reference key="1">
    <citation type="submission" date="2006-05" db="EMBL/GenBank/DDBJ databases">
        <authorList>
            <consortium name="Genoscope"/>
        </authorList>
    </citation>
    <scope>NUCLEOTIDE SEQUENCE [LARGE SCALE GENOMIC DNA]</scope>
    <source>
        <strain>WH7803</strain>
    </source>
</reference>
<sequence length="91" mass="10065">MGRSLKKGPFIADSLLRKVEKQNAADDKSVIKTWSRASTILPMMIGHTIAVHNGKTHVPVFVTEQMVGHKLGEFAPTRTFKGHIKDKKGGR</sequence>
<dbReference type="EMBL" id="CT971583">
    <property type="protein sequence ID" value="CAK22856.1"/>
    <property type="molecule type" value="Genomic_DNA"/>
</dbReference>
<dbReference type="SMR" id="A5GIU1"/>
<dbReference type="STRING" id="32051.SynWH7803_0430"/>
<dbReference type="KEGG" id="syx:SynWH7803_0430"/>
<dbReference type="eggNOG" id="COG0185">
    <property type="taxonomic scope" value="Bacteria"/>
</dbReference>
<dbReference type="HOGENOM" id="CLU_144911_0_1_3"/>
<dbReference type="OrthoDB" id="9797833at2"/>
<dbReference type="Proteomes" id="UP000001566">
    <property type="component" value="Chromosome"/>
</dbReference>
<dbReference type="GO" id="GO:0005737">
    <property type="term" value="C:cytoplasm"/>
    <property type="evidence" value="ECO:0007669"/>
    <property type="project" value="UniProtKB-ARBA"/>
</dbReference>
<dbReference type="GO" id="GO:0015935">
    <property type="term" value="C:small ribosomal subunit"/>
    <property type="evidence" value="ECO:0007669"/>
    <property type="project" value="InterPro"/>
</dbReference>
<dbReference type="GO" id="GO:0019843">
    <property type="term" value="F:rRNA binding"/>
    <property type="evidence" value="ECO:0007669"/>
    <property type="project" value="UniProtKB-UniRule"/>
</dbReference>
<dbReference type="GO" id="GO:0003735">
    <property type="term" value="F:structural constituent of ribosome"/>
    <property type="evidence" value="ECO:0007669"/>
    <property type="project" value="InterPro"/>
</dbReference>
<dbReference type="GO" id="GO:0000028">
    <property type="term" value="P:ribosomal small subunit assembly"/>
    <property type="evidence" value="ECO:0007669"/>
    <property type="project" value="TreeGrafter"/>
</dbReference>
<dbReference type="GO" id="GO:0006412">
    <property type="term" value="P:translation"/>
    <property type="evidence" value="ECO:0007669"/>
    <property type="project" value="UniProtKB-UniRule"/>
</dbReference>
<dbReference type="FunFam" id="3.30.860.10:FF:000001">
    <property type="entry name" value="30S ribosomal protein S19"/>
    <property type="match status" value="1"/>
</dbReference>
<dbReference type="Gene3D" id="3.30.860.10">
    <property type="entry name" value="30s Ribosomal Protein S19, Chain A"/>
    <property type="match status" value="1"/>
</dbReference>
<dbReference type="HAMAP" id="MF_00531">
    <property type="entry name" value="Ribosomal_uS19"/>
    <property type="match status" value="1"/>
</dbReference>
<dbReference type="InterPro" id="IPR002222">
    <property type="entry name" value="Ribosomal_uS19"/>
</dbReference>
<dbReference type="InterPro" id="IPR005732">
    <property type="entry name" value="Ribosomal_uS19_bac-type"/>
</dbReference>
<dbReference type="InterPro" id="IPR020934">
    <property type="entry name" value="Ribosomal_uS19_CS"/>
</dbReference>
<dbReference type="InterPro" id="IPR023575">
    <property type="entry name" value="Ribosomal_uS19_SF"/>
</dbReference>
<dbReference type="NCBIfam" id="TIGR01050">
    <property type="entry name" value="rpsS_bact"/>
    <property type="match status" value="1"/>
</dbReference>
<dbReference type="PANTHER" id="PTHR11880">
    <property type="entry name" value="RIBOSOMAL PROTEIN S19P FAMILY MEMBER"/>
    <property type="match status" value="1"/>
</dbReference>
<dbReference type="PANTHER" id="PTHR11880:SF8">
    <property type="entry name" value="SMALL RIBOSOMAL SUBUNIT PROTEIN US19M"/>
    <property type="match status" value="1"/>
</dbReference>
<dbReference type="Pfam" id="PF00203">
    <property type="entry name" value="Ribosomal_S19"/>
    <property type="match status" value="1"/>
</dbReference>
<dbReference type="PIRSF" id="PIRSF002144">
    <property type="entry name" value="Ribosomal_S19"/>
    <property type="match status" value="1"/>
</dbReference>
<dbReference type="PRINTS" id="PR00975">
    <property type="entry name" value="RIBOSOMALS19"/>
</dbReference>
<dbReference type="SUPFAM" id="SSF54570">
    <property type="entry name" value="Ribosomal protein S19"/>
    <property type="match status" value="1"/>
</dbReference>
<dbReference type="PROSITE" id="PS00323">
    <property type="entry name" value="RIBOSOMAL_S19"/>
    <property type="match status" value="1"/>
</dbReference>
<accession>A5GIU1</accession>